<evidence type="ECO:0000255" key="1">
    <source>
        <dbReference type="HAMAP-Rule" id="MF_01690"/>
    </source>
</evidence>
<name>DAPE_COXBU</name>
<feature type="chain" id="PRO_0000375534" description="Succinyl-diaminopimelate desuccinylase">
    <location>
        <begin position="1"/>
        <end position="374"/>
    </location>
</feature>
<feature type="active site" evidence="1">
    <location>
        <position position="68"/>
    </location>
</feature>
<feature type="active site" description="Proton acceptor" evidence="1">
    <location>
        <position position="133"/>
    </location>
</feature>
<feature type="binding site" evidence="1">
    <location>
        <position position="66"/>
    </location>
    <ligand>
        <name>Zn(2+)</name>
        <dbReference type="ChEBI" id="CHEBI:29105"/>
        <label>1</label>
    </ligand>
</feature>
<feature type="binding site" evidence="1">
    <location>
        <position position="99"/>
    </location>
    <ligand>
        <name>Zn(2+)</name>
        <dbReference type="ChEBI" id="CHEBI:29105"/>
        <label>1</label>
    </ligand>
</feature>
<feature type="binding site" evidence="1">
    <location>
        <position position="99"/>
    </location>
    <ligand>
        <name>Zn(2+)</name>
        <dbReference type="ChEBI" id="CHEBI:29105"/>
        <label>2</label>
    </ligand>
</feature>
<feature type="binding site" evidence="1">
    <location>
        <position position="134"/>
    </location>
    <ligand>
        <name>Zn(2+)</name>
        <dbReference type="ChEBI" id="CHEBI:29105"/>
        <label>2</label>
    </ligand>
</feature>
<feature type="binding site" evidence="1">
    <location>
        <position position="162"/>
    </location>
    <ligand>
        <name>Zn(2+)</name>
        <dbReference type="ChEBI" id="CHEBI:29105"/>
        <label>1</label>
    </ligand>
</feature>
<feature type="binding site" evidence="1">
    <location>
        <position position="348"/>
    </location>
    <ligand>
        <name>Zn(2+)</name>
        <dbReference type="ChEBI" id="CHEBI:29105"/>
        <label>2</label>
    </ligand>
</feature>
<dbReference type="EC" id="3.5.1.18" evidence="1"/>
<dbReference type="EMBL" id="AE016828">
    <property type="protein sequence ID" value="AAO90210.1"/>
    <property type="molecule type" value="Genomic_DNA"/>
</dbReference>
<dbReference type="RefSeq" id="NP_819696.1">
    <property type="nucleotide sequence ID" value="NC_002971.4"/>
</dbReference>
<dbReference type="RefSeq" id="WP_005771873.1">
    <property type="nucleotide sequence ID" value="NZ_CCYB01000047.1"/>
</dbReference>
<dbReference type="SMR" id="Q83DN2"/>
<dbReference type="STRING" id="227377.CBU_0666"/>
<dbReference type="EnsemblBacteria" id="AAO90210">
    <property type="protein sequence ID" value="AAO90210"/>
    <property type="gene ID" value="CBU_0666"/>
</dbReference>
<dbReference type="GeneID" id="1208552"/>
<dbReference type="KEGG" id="cbu:CBU_0666"/>
<dbReference type="PATRIC" id="fig|227377.7.peg.649"/>
<dbReference type="eggNOG" id="COG0624">
    <property type="taxonomic scope" value="Bacteria"/>
</dbReference>
<dbReference type="HOGENOM" id="CLU_021802_4_0_6"/>
<dbReference type="OrthoDB" id="9809784at2"/>
<dbReference type="UniPathway" id="UPA00034">
    <property type="reaction ID" value="UER00021"/>
</dbReference>
<dbReference type="Proteomes" id="UP000002671">
    <property type="component" value="Chromosome"/>
</dbReference>
<dbReference type="GO" id="GO:0005829">
    <property type="term" value="C:cytosol"/>
    <property type="evidence" value="ECO:0000318"/>
    <property type="project" value="GO_Central"/>
</dbReference>
<dbReference type="GO" id="GO:0050897">
    <property type="term" value="F:cobalt ion binding"/>
    <property type="evidence" value="ECO:0007669"/>
    <property type="project" value="UniProtKB-UniRule"/>
</dbReference>
<dbReference type="GO" id="GO:0009014">
    <property type="term" value="F:succinyl-diaminopimelate desuccinylase activity"/>
    <property type="evidence" value="ECO:0000318"/>
    <property type="project" value="GO_Central"/>
</dbReference>
<dbReference type="GO" id="GO:0008270">
    <property type="term" value="F:zinc ion binding"/>
    <property type="evidence" value="ECO:0007669"/>
    <property type="project" value="UniProtKB-UniRule"/>
</dbReference>
<dbReference type="GO" id="GO:0019877">
    <property type="term" value="P:diaminopimelate biosynthetic process"/>
    <property type="evidence" value="ECO:0007669"/>
    <property type="project" value="UniProtKB-UniRule"/>
</dbReference>
<dbReference type="GO" id="GO:0009089">
    <property type="term" value="P:lysine biosynthetic process via diaminopimelate"/>
    <property type="evidence" value="ECO:0000318"/>
    <property type="project" value="GO_Central"/>
</dbReference>
<dbReference type="CDD" id="cd03891">
    <property type="entry name" value="M20_DapE_proteobac"/>
    <property type="match status" value="1"/>
</dbReference>
<dbReference type="FunFam" id="3.30.70.360:FF:000011">
    <property type="entry name" value="Succinyl-diaminopimelate desuccinylase"/>
    <property type="match status" value="1"/>
</dbReference>
<dbReference type="FunFam" id="3.40.630.10:FF:000005">
    <property type="entry name" value="Succinyl-diaminopimelate desuccinylase"/>
    <property type="match status" value="1"/>
</dbReference>
<dbReference type="Gene3D" id="3.30.70.360">
    <property type="match status" value="1"/>
</dbReference>
<dbReference type="Gene3D" id="3.40.630.10">
    <property type="entry name" value="Zn peptidases"/>
    <property type="match status" value="1"/>
</dbReference>
<dbReference type="HAMAP" id="MF_01690">
    <property type="entry name" value="DapE"/>
    <property type="match status" value="1"/>
</dbReference>
<dbReference type="InterPro" id="IPR001261">
    <property type="entry name" value="ArgE/DapE_CS"/>
</dbReference>
<dbReference type="InterPro" id="IPR036264">
    <property type="entry name" value="Bact_exopeptidase_dim_dom"/>
</dbReference>
<dbReference type="InterPro" id="IPR005941">
    <property type="entry name" value="DapE_proteobac"/>
</dbReference>
<dbReference type="InterPro" id="IPR002933">
    <property type="entry name" value="Peptidase_M20"/>
</dbReference>
<dbReference type="InterPro" id="IPR011650">
    <property type="entry name" value="Peptidase_M20_dimer"/>
</dbReference>
<dbReference type="InterPro" id="IPR050072">
    <property type="entry name" value="Peptidase_M20A"/>
</dbReference>
<dbReference type="NCBIfam" id="TIGR01246">
    <property type="entry name" value="dapE_proteo"/>
    <property type="match status" value="1"/>
</dbReference>
<dbReference type="NCBIfam" id="NF009557">
    <property type="entry name" value="PRK13009.1"/>
    <property type="match status" value="1"/>
</dbReference>
<dbReference type="PANTHER" id="PTHR43808">
    <property type="entry name" value="ACETYLORNITHINE DEACETYLASE"/>
    <property type="match status" value="1"/>
</dbReference>
<dbReference type="PANTHER" id="PTHR43808:SF31">
    <property type="entry name" value="N-ACETYL-L-CITRULLINE DEACETYLASE"/>
    <property type="match status" value="1"/>
</dbReference>
<dbReference type="Pfam" id="PF07687">
    <property type="entry name" value="M20_dimer"/>
    <property type="match status" value="1"/>
</dbReference>
<dbReference type="Pfam" id="PF01546">
    <property type="entry name" value="Peptidase_M20"/>
    <property type="match status" value="1"/>
</dbReference>
<dbReference type="SUPFAM" id="SSF55031">
    <property type="entry name" value="Bacterial exopeptidase dimerisation domain"/>
    <property type="match status" value="1"/>
</dbReference>
<dbReference type="SUPFAM" id="SSF53187">
    <property type="entry name" value="Zn-dependent exopeptidases"/>
    <property type="match status" value="1"/>
</dbReference>
<dbReference type="PROSITE" id="PS00759">
    <property type="entry name" value="ARGE_DAPE_CPG2_2"/>
    <property type="match status" value="1"/>
</dbReference>
<sequence length="374" mass="41644">MSETLNLLKQLIERPSITPNDAGCQTILIDRLKSVGFQCEHLPFGEVHNFWAWHGHQSPFIIFAGHTDVVPPGDETQWHSPPFTPTEKNGYIYGRGAADMKSGLAAMVVAAENFVKQNPDHNGTIGFIVTSDEEGPAENGTQKVVDYLQQKNIKLDYCIVGEASSNEKLGDAIKIGRRGSMHGELTIIGKQGHIAYPHLADNPIHRSFQAFEALAKTKWDEGNEHFTPTSFQFYNVEAGAGAANVIPATLKAKFNFRFAPIHTTQQLQQKVERILNYYQLNYDIQWNVSSQPFFSGNGRLATFVRQAIQEICHLNTEPNTYGGTSDGRFIATTGCEVIELGPVNKTAHHVNENICIADLEKLTDIYFRTLQLLT</sequence>
<gene>
    <name evidence="1" type="primary">dapE</name>
    <name type="ordered locus">CBU_0666</name>
</gene>
<keyword id="KW-0028">Amino-acid biosynthesis</keyword>
<keyword id="KW-0170">Cobalt</keyword>
<keyword id="KW-0220">Diaminopimelate biosynthesis</keyword>
<keyword id="KW-0378">Hydrolase</keyword>
<keyword id="KW-0457">Lysine biosynthesis</keyword>
<keyword id="KW-0479">Metal-binding</keyword>
<keyword id="KW-1185">Reference proteome</keyword>
<keyword id="KW-0862">Zinc</keyword>
<proteinExistence type="inferred from homology"/>
<protein>
    <recommendedName>
        <fullName evidence="1">Succinyl-diaminopimelate desuccinylase</fullName>
        <shortName evidence="1">SDAP desuccinylase</shortName>
        <ecNumber evidence="1">3.5.1.18</ecNumber>
    </recommendedName>
    <alternativeName>
        <fullName evidence="1">N-succinyl-LL-2,6-diaminoheptanedioate amidohydrolase</fullName>
    </alternativeName>
</protein>
<reference key="1">
    <citation type="journal article" date="2003" name="Proc. Natl. Acad. Sci. U.S.A.">
        <title>Complete genome sequence of the Q-fever pathogen, Coxiella burnetii.</title>
        <authorList>
            <person name="Seshadri R."/>
            <person name="Paulsen I.T."/>
            <person name="Eisen J.A."/>
            <person name="Read T.D."/>
            <person name="Nelson K.E."/>
            <person name="Nelson W.C."/>
            <person name="Ward N.L."/>
            <person name="Tettelin H."/>
            <person name="Davidsen T.M."/>
            <person name="Beanan M.J."/>
            <person name="DeBoy R.T."/>
            <person name="Daugherty S.C."/>
            <person name="Brinkac L.M."/>
            <person name="Madupu R."/>
            <person name="Dodson R.J."/>
            <person name="Khouri H.M."/>
            <person name="Lee K.H."/>
            <person name="Carty H.A."/>
            <person name="Scanlan D."/>
            <person name="Heinzen R.A."/>
            <person name="Thompson H.A."/>
            <person name="Samuel J.E."/>
            <person name="Fraser C.M."/>
            <person name="Heidelberg J.F."/>
        </authorList>
    </citation>
    <scope>NUCLEOTIDE SEQUENCE [LARGE SCALE GENOMIC DNA]</scope>
    <source>
        <strain>RSA 493 / Nine Mile phase I</strain>
    </source>
</reference>
<organism>
    <name type="scientific">Coxiella burnetii (strain RSA 493 / Nine Mile phase I)</name>
    <dbReference type="NCBI Taxonomy" id="227377"/>
    <lineage>
        <taxon>Bacteria</taxon>
        <taxon>Pseudomonadati</taxon>
        <taxon>Pseudomonadota</taxon>
        <taxon>Gammaproteobacteria</taxon>
        <taxon>Legionellales</taxon>
        <taxon>Coxiellaceae</taxon>
        <taxon>Coxiella</taxon>
    </lineage>
</organism>
<comment type="function">
    <text evidence="1">Catalyzes the hydrolysis of N-succinyl-L,L-diaminopimelic acid (SDAP), forming succinate and LL-2,6-diaminopimelate (DAP), an intermediate involved in the bacterial biosynthesis of lysine and meso-diaminopimelic acid, an essential component of bacterial cell walls.</text>
</comment>
<comment type="catalytic activity">
    <reaction evidence="1">
        <text>N-succinyl-(2S,6S)-2,6-diaminopimelate + H2O = (2S,6S)-2,6-diaminopimelate + succinate</text>
        <dbReference type="Rhea" id="RHEA:22608"/>
        <dbReference type="ChEBI" id="CHEBI:15377"/>
        <dbReference type="ChEBI" id="CHEBI:30031"/>
        <dbReference type="ChEBI" id="CHEBI:57609"/>
        <dbReference type="ChEBI" id="CHEBI:58087"/>
        <dbReference type="EC" id="3.5.1.18"/>
    </reaction>
</comment>
<comment type="cofactor">
    <cofactor evidence="1">
        <name>Zn(2+)</name>
        <dbReference type="ChEBI" id="CHEBI:29105"/>
    </cofactor>
    <cofactor evidence="1">
        <name>Co(2+)</name>
        <dbReference type="ChEBI" id="CHEBI:48828"/>
    </cofactor>
    <text evidence="1">Binds 2 Zn(2+) or Co(2+) ions per subunit.</text>
</comment>
<comment type="pathway">
    <text evidence="1">Amino-acid biosynthesis; L-lysine biosynthesis via DAP pathway; LL-2,6-diaminopimelate from (S)-tetrahydrodipicolinate (succinylase route): step 3/3.</text>
</comment>
<comment type="subunit">
    <text evidence="1">Homodimer.</text>
</comment>
<comment type="similarity">
    <text evidence="1">Belongs to the peptidase M20A family. DapE subfamily.</text>
</comment>
<accession>Q83DN2</accession>